<proteinExistence type="inferred from homology"/>
<comment type="function">
    <text evidence="1">Part of the high-affinity ATP-driven potassium transport (or Kdp) system, which catalyzes the hydrolysis of ATP coupled with the electrogenic transport of potassium into the cytoplasm. This subunit acts as a catalytic chaperone that increases the ATP-binding affinity of the ATP-hydrolyzing subunit KdpB by the formation of a transient KdpB/KdpC/ATP ternary complex.</text>
</comment>
<comment type="subunit">
    <text evidence="1">The system is composed of three essential subunits: KdpA, KdpB and KdpC.</text>
</comment>
<comment type="subcellular location">
    <subcellularLocation>
        <location evidence="1">Cell membrane</location>
        <topology evidence="1">Single-pass membrane protein</topology>
    </subcellularLocation>
</comment>
<comment type="similarity">
    <text evidence="1">Belongs to the KdpC family.</text>
</comment>
<sequence>MSTFFKGIKKPFLVTLVLLLVCGLAYPLILTGISQVIFPKQANGSLVIVNGKAIGSALIGQDFTDGRFMKGRPSAVNYNTYIREDKDSGNYAGVGSGSKNYAPTNPELVKRVQEDIDAFLKANPSIKKEDIPTDLLTASGSGLDPHISPESAAVQILALVKSTGLSKDKLETIVKNNTQGKAFGVFGEKTVNVLKVNLDIAKELGLFNKK</sequence>
<feature type="chain" id="PRO_1000078793" description="Potassium-transporting ATPase KdpC subunit">
    <location>
        <begin position="1"/>
        <end position="210"/>
    </location>
</feature>
<feature type="transmembrane region" description="Helical" evidence="1">
    <location>
        <begin position="13"/>
        <end position="33"/>
    </location>
</feature>
<protein>
    <recommendedName>
        <fullName evidence="1">Potassium-transporting ATPase KdpC subunit</fullName>
    </recommendedName>
    <alternativeName>
        <fullName evidence="1">ATP phosphohydrolase [potassium-transporting] C chain</fullName>
    </alternativeName>
    <alternativeName>
        <fullName evidence="1">Potassium-binding and translocating subunit C</fullName>
    </alternativeName>
    <alternativeName>
        <fullName evidence="1">Potassium-translocating ATPase C chain</fullName>
    </alternativeName>
</protein>
<organism>
    <name type="scientific">Clostridium kluyveri (strain ATCC 8527 / DSM 555 / NBRC 12016 / NCIMB 10680 / K1)</name>
    <dbReference type="NCBI Taxonomy" id="431943"/>
    <lineage>
        <taxon>Bacteria</taxon>
        <taxon>Bacillati</taxon>
        <taxon>Bacillota</taxon>
        <taxon>Clostridia</taxon>
        <taxon>Eubacteriales</taxon>
        <taxon>Clostridiaceae</taxon>
        <taxon>Clostridium</taxon>
    </lineage>
</organism>
<accession>A5N884</accession>
<reference key="1">
    <citation type="journal article" date="2008" name="Proc. Natl. Acad. Sci. U.S.A.">
        <title>The genome of Clostridium kluyveri, a strict anaerobe with unique metabolic features.</title>
        <authorList>
            <person name="Seedorf H."/>
            <person name="Fricke W.F."/>
            <person name="Veith B."/>
            <person name="Brueggemann H."/>
            <person name="Liesegang H."/>
            <person name="Strittmatter A."/>
            <person name="Miethke M."/>
            <person name="Buckel W."/>
            <person name="Hinderberger J."/>
            <person name="Li F."/>
            <person name="Hagemeier C."/>
            <person name="Thauer R.K."/>
            <person name="Gottschalk G."/>
        </authorList>
    </citation>
    <scope>NUCLEOTIDE SEQUENCE [LARGE SCALE GENOMIC DNA]</scope>
    <source>
        <strain>ATCC 8527 / DSM 555 / NBRC 12016 / NCIMB 10680 / K1</strain>
    </source>
</reference>
<name>KDPC_CLOK5</name>
<gene>
    <name evidence="1" type="primary">kdpC</name>
    <name type="ordered locus">CKL_1473</name>
</gene>
<keyword id="KW-0067">ATP-binding</keyword>
<keyword id="KW-1003">Cell membrane</keyword>
<keyword id="KW-0406">Ion transport</keyword>
<keyword id="KW-0472">Membrane</keyword>
<keyword id="KW-0547">Nucleotide-binding</keyword>
<keyword id="KW-0630">Potassium</keyword>
<keyword id="KW-0633">Potassium transport</keyword>
<keyword id="KW-1185">Reference proteome</keyword>
<keyword id="KW-0812">Transmembrane</keyword>
<keyword id="KW-1133">Transmembrane helix</keyword>
<keyword id="KW-0813">Transport</keyword>
<evidence type="ECO:0000255" key="1">
    <source>
        <dbReference type="HAMAP-Rule" id="MF_00276"/>
    </source>
</evidence>
<dbReference type="EMBL" id="CP000673">
    <property type="protein sequence ID" value="EDK33515.1"/>
    <property type="molecule type" value="Genomic_DNA"/>
</dbReference>
<dbReference type="RefSeq" id="WP_012101865.1">
    <property type="nucleotide sequence ID" value="NC_009706.1"/>
</dbReference>
<dbReference type="SMR" id="A5N884"/>
<dbReference type="STRING" id="431943.CKL_1473"/>
<dbReference type="KEGG" id="ckl:CKL_1473"/>
<dbReference type="eggNOG" id="COG2156">
    <property type="taxonomic scope" value="Bacteria"/>
</dbReference>
<dbReference type="HOGENOM" id="CLU_077094_1_0_9"/>
<dbReference type="Proteomes" id="UP000002411">
    <property type="component" value="Chromosome"/>
</dbReference>
<dbReference type="GO" id="GO:0005886">
    <property type="term" value="C:plasma membrane"/>
    <property type="evidence" value="ECO:0007669"/>
    <property type="project" value="UniProtKB-SubCell"/>
</dbReference>
<dbReference type="GO" id="GO:0005524">
    <property type="term" value="F:ATP binding"/>
    <property type="evidence" value="ECO:0007669"/>
    <property type="project" value="UniProtKB-UniRule"/>
</dbReference>
<dbReference type="GO" id="GO:0008556">
    <property type="term" value="F:P-type potassium transmembrane transporter activity"/>
    <property type="evidence" value="ECO:0007669"/>
    <property type="project" value="InterPro"/>
</dbReference>
<dbReference type="HAMAP" id="MF_00276">
    <property type="entry name" value="KdpC"/>
    <property type="match status" value="1"/>
</dbReference>
<dbReference type="InterPro" id="IPR003820">
    <property type="entry name" value="KdpC"/>
</dbReference>
<dbReference type="NCBIfam" id="TIGR00681">
    <property type="entry name" value="kdpC"/>
    <property type="match status" value="1"/>
</dbReference>
<dbReference type="NCBIfam" id="NF001454">
    <property type="entry name" value="PRK00315.1"/>
    <property type="match status" value="1"/>
</dbReference>
<dbReference type="NCBIfam" id="NF010600">
    <property type="entry name" value="PRK13995.1"/>
    <property type="match status" value="1"/>
</dbReference>
<dbReference type="PANTHER" id="PTHR30042">
    <property type="entry name" value="POTASSIUM-TRANSPORTING ATPASE C CHAIN"/>
    <property type="match status" value="1"/>
</dbReference>
<dbReference type="PANTHER" id="PTHR30042:SF2">
    <property type="entry name" value="POTASSIUM-TRANSPORTING ATPASE KDPC SUBUNIT"/>
    <property type="match status" value="1"/>
</dbReference>
<dbReference type="Pfam" id="PF02669">
    <property type="entry name" value="KdpC"/>
    <property type="match status" value="1"/>
</dbReference>
<dbReference type="PIRSF" id="PIRSF001296">
    <property type="entry name" value="K_ATPase_KdpC"/>
    <property type="match status" value="1"/>
</dbReference>